<comment type="function">
    <text evidence="1">Zinc phosphodiesterase, which has both exoribonuclease and endoribonuclease activities.</text>
</comment>
<comment type="cofactor">
    <cofactor evidence="1">
        <name>Zn(2+)</name>
        <dbReference type="ChEBI" id="CHEBI:29105"/>
    </cofactor>
    <text evidence="1">Binds 2 Zn(2+) ions.</text>
</comment>
<comment type="subunit">
    <text evidence="1">Homodimer.</text>
</comment>
<comment type="similarity">
    <text evidence="1">Belongs to the RNase Z family. RNase BN subfamily.</text>
</comment>
<sequence>MELTFLGTNAGVPSKDRNVTSMVLDLQNKQKSLWMFDCGEATQHQILHSHVKLSRINKIFITHLHGDHIFGLPGLLCSRSMGGTENPLTIYGPTGIKAFIETALTLSQSYLTYPLDIIEIEQDGFLFEEEGIRASCGALSHPVPCFGYRLEEDNKPGKLNADKLETENIPRGPWYKLLKQGKTVTLPDGRIIDGKDYLSTEIKGRCIVIFGDTQPTPNAVKLAENADVIVHEATFKHDMADKANSRGHSSTIQAAELAKKANAKRLIITHISSRYSPKETPELLAECHTIFDNTQIASDFETFKL</sequence>
<reference key="1">
    <citation type="journal article" date="2008" name="J. Bacteriol.">
        <title>Complete genome sequence of uropathogenic Proteus mirabilis, a master of both adherence and motility.</title>
        <authorList>
            <person name="Pearson M.M."/>
            <person name="Sebaihia M."/>
            <person name="Churcher C."/>
            <person name="Quail M.A."/>
            <person name="Seshasayee A.S."/>
            <person name="Luscombe N.M."/>
            <person name="Abdellah Z."/>
            <person name="Arrosmith C."/>
            <person name="Atkin B."/>
            <person name="Chillingworth T."/>
            <person name="Hauser H."/>
            <person name="Jagels K."/>
            <person name="Moule S."/>
            <person name="Mungall K."/>
            <person name="Norbertczak H."/>
            <person name="Rabbinowitsch E."/>
            <person name="Walker D."/>
            <person name="Whithead S."/>
            <person name="Thomson N.R."/>
            <person name="Rather P.N."/>
            <person name="Parkhill J."/>
            <person name="Mobley H.L.T."/>
        </authorList>
    </citation>
    <scope>NUCLEOTIDE SEQUENCE [LARGE SCALE GENOMIC DNA]</scope>
    <source>
        <strain>HI4320</strain>
    </source>
</reference>
<dbReference type="EC" id="3.1.-.-" evidence="1"/>
<dbReference type="EMBL" id="AM942759">
    <property type="protein sequence ID" value="CAR40697.1"/>
    <property type="molecule type" value="Genomic_DNA"/>
</dbReference>
<dbReference type="RefSeq" id="WP_012367526.1">
    <property type="nucleotide sequence ID" value="NC_010554.1"/>
</dbReference>
<dbReference type="SMR" id="B4EUI8"/>
<dbReference type="EnsemblBacteria" id="CAR40697">
    <property type="protein sequence ID" value="CAR40697"/>
    <property type="gene ID" value="PMI0252"/>
</dbReference>
<dbReference type="GeneID" id="6801057"/>
<dbReference type="KEGG" id="pmr:PMI0252"/>
<dbReference type="eggNOG" id="COG1234">
    <property type="taxonomic scope" value="Bacteria"/>
</dbReference>
<dbReference type="HOGENOM" id="CLU_031317_2_0_6"/>
<dbReference type="Proteomes" id="UP000008319">
    <property type="component" value="Chromosome"/>
</dbReference>
<dbReference type="GO" id="GO:0042781">
    <property type="term" value="F:3'-tRNA processing endoribonuclease activity"/>
    <property type="evidence" value="ECO:0007669"/>
    <property type="project" value="TreeGrafter"/>
</dbReference>
<dbReference type="GO" id="GO:0004527">
    <property type="term" value="F:exonuclease activity"/>
    <property type="evidence" value="ECO:0007669"/>
    <property type="project" value="UniProtKB-UniRule"/>
</dbReference>
<dbReference type="GO" id="GO:0008270">
    <property type="term" value="F:zinc ion binding"/>
    <property type="evidence" value="ECO:0007669"/>
    <property type="project" value="UniProtKB-UniRule"/>
</dbReference>
<dbReference type="CDD" id="cd07717">
    <property type="entry name" value="RNaseZ_ZiPD-like_MBL-fold"/>
    <property type="match status" value="1"/>
</dbReference>
<dbReference type="FunFam" id="3.60.15.10:FF:000002">
    <property type="entry name" value="Ribonuclease Z"/>
    <property type="match status" value="1"/>
</dbReference>
<dbReference type="Gene3D" id="3.60.15.10">
    <property type="entry name" value="Ribonuclease Z/Hydroxyacylglutathione hydrolase-like"/>
    <property type="match status" value="1"/>
</dbReference>
<dbReference type="HAMAP" id="MF_01818">
    <property type="entry name" value="RNase_Z_BN"/>
    <property type="match status" value="1"/>
</dbReference>
<dbReference type="InterPro" id="IPR001279">
    <property type="entry name" value="Metallo-B-lactamas"/>
</dbReference>
<dbReference type="InterPro" id="IPR036866">
    <property type="entry name" value="RibonucZ/Hydroxyglut_hydro"/>
</dbReference>
<dbReference type="InterPro" id="IPR013471">
    <property type="entry name" value="RNase_Z/BN"/>
</dbReference>
<dbReference type="NCBIfam" id="NF000800">
    <property type="entry name" value="PRK00055.1-1"/>
    <property type="match status" value="1"/>
</dbReference>
<dbReference type="NCBIfam" id="NF000801">
    <property type="entry name" value="PRK00055.1-3"/>
    <property type="match status" value="1"/>
</dbReference>
<dbReference type="NCBIfam" id="TIGR02651">
    <property type="entry name" value="RNase_Z"/>
    <property type="match status" value="1"/>
</dbReference>
<dbReference type="PANTHER" id="PTHR46018">
    <property type="entry name" value="ZINC PHOSPHODIESTERASE ELAC PROTEIN 1"/>
    <property type="match status" value="1"/>
</dbReference>
<dbReference type="PANTHER" id="PTHR46018:SF2">
    <property type="entry name" value="ZINC PHOSPHODIESTERASE ELAC PROTEIN 1"/>
    <property type="match status" value="1"/>
</dbReference>
<dbReference type="Pfam" id="PF00753">
    <property type="entry name" value="Lactamase_B"/>
    <property type="match status" value="1"/>
</dbReference>
<dbReference type="Pfam" id="PF12706">
    <property type="entry name" value="Lactamase_B_2"/>
    <property type="match status" value="1"/>
</dbReference>
<dbReference type="SUPFAM" id="SSF56281">
    <property type="entry name" value="Metallo-hydrolase/oxidoreductase"/>
    <property type="match status" value="1"/>
</dbReference>
<evidence type="ECO:0000255" key="1">
    <source>
        <dbReference type="HAMAP-Rule" id="MF_01818"/>
    </source>
</evidence>
<feature type="chain" id="PRO_1000187977" description="Ribonuclease BN">
    <location>
        <begin position="1"/>
        <end position="305"/>
    </location>
</feature>
<feature type="active site" description="Proton acceptor" evidence="1">
    <location>
        <position position="67"/>
    </location>
</feature>
<feature type="binding site" evidence="1">
    <location>
        <position position="63"/>
    </location>
    <ligand>
        <name>Zn(2+)</name>
        <dbReference type="ChEBI" id="CHEBI:29105"/>
        <label>1</label>
        <note>catalytic</note>
    </ligand>
</feature>
<feature type="binding site" evidence="1">
    <location>
        <position position="65"/>
    </location>
    <ligand>
        <name>Zn(2+)</name>
        <dbReference type="ChEBI" id="CHEBI:29105"/>
        <label>1</label>
        <note>catalytic</note>
    </ligand>
</feature>
<feature type="binding site" evidence="1">
    <location>
        <position position="67"/>
    </location>
    <ligand>
        <name>Zn(2+)</name>
        <dbReference type="ChEBI" id="CHEBI:29105"/>
        <label>2</label>
        <note>catalytic</note>
    </ligand>
</feature>
<feature type="binding site" evidence="1">
    <location>
        <position position="68"/>
    </location>
    <ligand>
        <name>Zn(2+)</name>
        <dbReference type="ChEBI" id="CHEBI:29105"/>
        <label>2</label>
        <note>catalytic</note>
    </ligand>
</feature>
<feature type="binding site" evidence="1">
    <location>
        <position position="141"/>
    </location>
    <ligand>
        <name>Zn(2+)</name>
        <dbReference type="ChEBI" id="CHEBI:29105"/>
        <label>1</label>
        <note>catalytic</note>
    </ligand>
</feature>
<feature type="binding site" evidence="1">
    <location>
        <position position="212"/>
    </location>
    <ligand>
        <name>Zn(2+)</name>
        <dbReference type="ChEBI" id="CHEBI:29105"/>
        <label>1</label>
        <note>catalytic</note>
    </ligand>
</feature>
<feature type="binding site" evidence="1">
    <location>
        <position position="212"/>
    </location>
    <ligand>
        <name>Zn(2+)</name>
        <dbReference type="ChEBI" id="CHEBI:29105"/>
        <label>2</label>
        <note>catalytic</note>
    </ligand>
</feature>
<feature type="binding site" evidence="1">
    <location>
        <position position="270"/>
    </location>
    <ligand>
        <name>Zn(2+)</name>
        <dbReference type="ChEBI" id="CHEBI:29105"/>
        <label>2</label>
        <note>catalytic</note>
    </ligand>
</feature>
<protein>
    <recommendedName>
        <fullName evidence="1">Ribonuclease BN</fullName>
        <shortName evidence="1">RNase BN</shortName>
        <ecNumber evidence="1">3.1.-.-</ecNumber>
    </recommendedName>
    <alternativeName>
        <fullName evidence="1">Ribonuclease Z homolog</fullName>
        <shortName evidence="1">RNase Z homolog</shortName>
    </alternativeName>
</protein>
<keyword id="KW-0255">Endonuclease</keyword>
<keyword id="KW-0269">Exonuclease</keyword>
<keyword id="KW-0378">Hydrolase</keyword>
<keyword id="KW-0479">Metal-binding</keyword>
<keyword id="KW-0540">Nuclease</keyword>
<keyword id="KW-1185">Reference proteome</keyword>
<keyword id="KW-0819">tRNA processing</keyword>
<keyword id="KW-0862">Zinc</keyword>
<name>RBN_PROMH</name>
<gene>
    <name evidence="1" type="primary">rbn</name>
    <name type="synonym">rnz</name>
    <name type="ordered locus">PMI0252</name>
</gene>
<accession>B4EUI8</accession>
<proteinExistence type="inferred from homology"/>
<organism>
    <name type="scientific">Proteus mirabilis (strain HI4320)</name>
    <dbReference type="NCBI Taxonomy" id="529507"/>
    <lineage>
        <taxon>Bacteria</taxon>
        <taxon>Pseudomonadati</taxon>
        <taxon>Pseudomonadota</taxon>
        <taxon>Gammaproteobacteria</taxon>
        <taxon>Enterobacterales</taxon>
        <taxon>Morganellaceae</taxon>
        <taxon>Proteus</taxon>
    </lineage>
</organism>